<proteinExistence type="inferred from homology"/>
<feature type="chain" id="PRO_0000341097" description="D-alanine--D-alanine ligase">
    <location>
        <begin position="1"/>
        <end position="296"/>
    </location>
</feature>
<feature type="domain" description="ATP-grasp" evidence="2">
    <location>
        <begin position="103"/>
        <end position="293"/>
    </location>
</feature>
<feature type="binding site" evidence="2">
    <location>
        <begin position="129"/>
        <end position="180"/>
    </location>
    <ligand>
        <name>ATP</name>
        <dbReference type="ChEBI" id="CHEBI:30616"/>
    </ligand>
</feature>
<feature type="binding site" evidence="2">
    <location>
        <position position="247"/>
    </location>
    <ligand>
        <name>Mg(2+)</name>
        <dbReference type="ChEBI" id="CHEBI:18420"/>
        <label>1</label>
    </ligand>
</feature>
<feature type="binding site" evidence="2">
    <location>
        <position position="260"/>
    </location>
    <ligand>
        <name>Mg(2+)</name>
        <dbReference type="ChEBI" id="CHEBI:18420"/>
        <label>1</label>
    </ligand>
</feature>
<feature type="binding site" evidence="2">
    <location>
        <position position="260"/>
    </location>
    <ligand>
        <name>Mg(2+)</name>
        <dbReference type="ChEBI" id="CHEBI:18420"/>
        <label>2</label>
    </ligand>
</feature>
<feature type="binding site" evidence="2">
    <location>
        <position position="262"/>
    </location>
    <ligand>
        <name>Mg(2+)</name>
        <dbReference type="ChEBI" id="CHEBI:18420"/>
        <label>2</label>
    </ligand>
</feature>
<name>DDL_FRATN</name>
<accession>A0Q4A6</accession>
<gene>
    <name evidence="2" type="primary">ddl</name>
    <name type="ordered locus">FTN_0161</name>
</gene>
<reference key="1">
    <citation type="journal article" date="2007" name="Genome Biol.">
        <title>Comparison of Francisella tularensis genomes reveals evolutionary events associated with the emergence of human pathogenic strains.</title>
        <authorList>
            <person name="Rohmer L."/>
            <person name="Fong C."/>
            <person name="Abmayr S."/>
            <person name="Wasnick M."/>
            <person name="Larson Freeman T.J."/>
            <person name="Radey M."/>
            <person name="Guina T."/>
            <person name="Svensson K."/>
            <person name="Hayden H.S."/>
            <person name="Jacobs M."/>
            <person name="Gallagher L.A."/>
            <person name="Manoil C."/>
            <person name="Ernst R.K."/>
            <person name="Drees B."/>
            <person name="Buckley D."/>
            <person name="Haugen E."/>
            <person name="Bovee D."/>
            <person name="Zhou Y."/>
            <person name="Chang J."/>
            <person name="Levy R."/>
            <person name="Lim R."/>
            <person name="Gillett W."/>
            <person name="Guenthener D."/>
            <person name="Kang A."/>
            <person name="Shaffer S.A."/>
            <person name="Taylor G."/>
            <person name="Chen J."/>
            <person name="Gallis B."/>
            <person name="D'Argenio D.A."/>
            <person name="Forsman M."/>
            <person name="Olson M.V."/>
            <person name="Goodlett D.R."/>
            <person name="Kaul R."/>
            <person name="Miller S.I."/>
            <person name="Brittnacher M.J."/>
        </authorList>
    </citation>
    <scope>NUCLEOTIDE SEQUENCE [LARGE SCALE GENOMIC DNA]</scope>
    <source>
        <strain>U112</strain>
    </source>
</reference>
<comment type="function">
    <text evidence="2">Cell wall formation.</text>
</comment>
<comment type="catalytic activity">
    <reaction evidence="2">
        <text>2 D-alanine + ATP = D-alanyl-D-alanine + ADP + phosphate + H(+)</text>
        <dbReference type="Rhea" id="RHEA:11224"/>
        <dbReference type="ChEBI" id="CHEBI:15378"/>
        <dbReference type="ChEBI" id="CHEBI:30616"/>
        <dbReference type="ChEBI" id="CHEBI:43474"/>
        <dbReference type="ChEBI" id="CHEBI:57416"/>
        <dbReference type="ChEBI" id="CHEBI:57822"/>
        <dbReference type="ChEBI" id="CHEBI:456216"/>
        <dbReference type="EC" id="6.3.2.4"/>
    </reaction>
</comment>
<comment type="cofactor">
    <cofactor evidence="1">
        <name>Mg(2+)</name>
        <dbReference type="ChEBI" id="CHEBI:18420"/>
    </cofactor>
    <cofactor evidence="1">
        <name>Mn(2+)</name>
        <dbReference type="ChEBI" id="CHEBI:29035"/>
    </cofactor>
    <text evidence="1">Binds 2 magnesium or manganese ions per subunit.</text>
</comment>
<comment type="pathway">
    <text evidence="2">Cell wall biogenesis; peptidoglycan biosynthesis.</text>
</comment>
<comment type="subcellular location">
    <subcellularLocation>
        <location evidence="2">Cytoplasm</location>
    </subcellularLocation>
</comment>
<comment type="similarity">
    <text evidence="2">Belongs to the D-alanine--D-alanine ligase family.</text>
</comment>
<dbReference type="EC" id="6.3.2.4" evidence="2"/>
<dbReference type="EMBL" id="CP000439">
    <property type="protein sequence ID" value="ABK89071.1"/>
    <property type="molecule type" value="Genomic_DNA"/>
</dbReference>
<dbReference type="RefSeq" id="WP_011733579.1">
    <property type="nucleotide sequence ID" value="NZ_CP009633.1"/>
</dbReference>
<dbReference type="SMR" id="A0Q4A6"/>
<dbReference type="KEGG" id="ftn:FTN_0161"/>
<dbReference type="KEGG" id="ftx:AW25_39"/>
<dbReference type="BioCyc" id="FTUL401614:G1G75-166-MONOMER"/>
<dbReference type="UniPathway" id="UPA00219"/>
<dbReference type="Proteomes" id="UP000000762">
    <property type="component" value="Chromosome"/>
</dbReference>
<dbReference type="GO" id="GO:0005737">
    <property type="term" value="C:cytoplasm"/>
    <property type="evidence" value="ECO:0007669"/>
    <property type="project" value="UniProtKB-SubCell"/>
</dbReference>
<dbReference type="GO" id="GO:0005524">
    <property type="term" value="F:ATP binding"/>
    <property type="evidence" value="ECO:0007669"/>
    <property type="project" value="UniProtKB-KW"/>
</dbReference>
<dbReference type="GO" id="GO:0008716">
    <property type="term" value="F:D-alanine-D-alanine ligase activity"/>
    <property type="evidence" value="ECO:0007669"/>
    <property type="project" value="UniProtKB-UniRule"/>
</dbReference>
<dbReference type="GO" id="GO:0046872">
    <property type="term" value="F:metal ion binding"/>
    <property type="evidence" value="ECO:0007669"/>
    <property type="project" value="UniProtKB-KW"/>
</dbReference>
<dbReference type="GO" id="GO:0071555">
    <property type="term" value="P:cell wall organization"/>
    <property type="evidence" value="ECO:0007669"/>
    <property type="project" value="UniProtKB-KW"/>
</dbReference>
<dbReference type="GO" id="GO:0009252">
    <property type="term" value="P:peptidoglycan biosynthetic process"/>
    <property type="evidence" value="ECO:0007669"/>
    <property type="project" value="UniProtKB-UniRule"/>
</dbReference>
<dbReference type="GO" id="GO:0008360">
    <property type="term" value="P:regulation of cell shape"/>
    <property type="evidence" value="ECO:0007669"/>
    <property type="project" value="UniProtKB-KW"/>
</dbReference>
<dbReference type="Gene3D" id="3.40.50.20">
    <property type="match status" value="1"/>
</dbReference>
<dbReference type="Gene3D" id="3.30.1490.20">
    <property type="entry name" value="ATP-grasp fold, A domain"/>
    <property type="match status" value="1"/>
</dbReference>
<dbReference type="Gene3D" id="3.30.470.20">
    <property type="entry name" value="ATP-grasp fold, B domain"/>
    <property type="match status" value="1"/>
</dbReference>
<dbReference type="HAMAP" id="MF_00047">
    <property type="entry name" value="Dala_Dala_lig"/>
    <property type="match status" value="1"/>
</dbReference>
<dbReference type="InterPro" id="IPR011761">
    <property type="entry name" value="ATP-grasp"/>
</dbReference>
<dbReference type="InterPro" id="IPR013815">
    <property type="entry name" value="ATP_grasp_subdomain_1"/>
</dbReference>
<dbReference type="InterPro" id="IPR000291">
    <property type="entry name" value="D-Ala_lig_Van_CS"/>
</dbReference>
<dbReference type="InterPro" id="IPR005905">
    <property type="entry name" value="D_ala_D_ala"/>
</dbReference>
<dbReference type="InterPro" id="IPR011095">
    <property type="entry name" value="Dala_Dala_lig_C"/>
</dbReference>
<dbReference type="InterPro" id="IPR016185">
    <property type="entry name" value="PreATP-grasp_dom_sf"/>
</dbReference>
<dbReference type="NCBIfam" id="TIGR01205">
    <property type="entry name" value="D_ala_D_alaTIGR"/>
    <property type="match status" value="1"/>
</dbReference>
<dbReference type="NCBIfam" id="NF002378">
    <property type="entry name" value="PRK01372.1"/>
    <property type="match status" value="1"/>
</dbReference>
<dbReference type="NCBIfam" id="NF011167">
    <property type="entry name" value="PRK14569.1"/>
    <property type="match status" value="1"/>
</dbReference>
<dbReference type="PANTHER" id="PTHR23132">
    <property type="entry name" value="D-ALANINE--D-ALANINE LIGASE"/>
    <property type="match status" value="1"/>
</dbReference>
<dbReference type="PANTHER" id="PTHR23132:SF23">
    <property type="entry name" value="D-ALANINE--D-ALANINE LIGASE B"/>
    <property type="match status" value="1"/>
</dbReference>
<dbReference type="Pfam" id="PF07478">
    <property type="entry name" value="Dala_Dala_lig_C"/>
    <property type="match status" value="1"/>
</dbReference>
<dbReference type="PIRSF" id="PIRSF039102">
    <property type="entry name" value="Ddl/VanB"/>
    <property type="match status" value="1"/>
</dbReference>
<dbReference type="SUPFAM" id="SSF56059">
    <property type="entry name" value="Glutathione synthetase ATP-binding domain-like"/>
    <property type="match status" value="1"/>
</dbReference>
<dbReference type="SUPFAM" id="SSF52440">
    <property type="entry name" value="PreATP-grasp domain"/>
    <property type="match status" value="1"/>
</dbReference>
<dbReference type="PROSITE" id="PS50975">
    <property type="entry name" value="ATP_GRASP"/>
    <property type="match status" value="1"/>
</dbReference>
<dbReference type="PROSITE" id="PS00843">
    <property type="entry name" value="DALA_DALA_LIGASE_1"/>
    <property type="match status" value="1"/>
</dbReference>
<dbReference type="PROSITE" id="PS00844">
    <property type="entry name" value="DALA_DALA_LIGASE_2"/>
    <property type="match status" value="1"/>
</dbReference>
<sequence length="296" mass="32786">MKNEKIVVLYGGDSPEREVSLKSGKAVLDSLISQGYDAVGVDASGKELVAKLLELKPDKCFVALHGEDGENGRVSALLEMLEIKHTSSSMKSSVITMDKMISKEILMHHRMPTPMAKFLTDKLVAEDEISFPVAVKPSSGGSSIATFKVKSIQELKHAYEEASKYGEVMIEQWVTGKEITVAIVNDEVYSSVWIEPQNEFYDYESKYSGKSIYHSPSGLCEQKELEVRQLAKKAYDLLGCSGHARVDFIYDDRGNFYIMEINSSPGMTENSLSPKSAAAEGVDFDSFVKRIIEQAQ</sequence>
<organism>
    <name type="scientific">Francisella tularensis subsp. novicida (strain U112)</name>
    <dbReference type="NCBI Taxonomy" id="401614"/>
    <lineage>
        <taxon>Bacteria</taxon>
        <taxon>Pseudomonadati</taxon>
        <taxon>Pseudomonadota</taxon>
        <taxon>Gammaproteobacteria</taxon>
        <taxon>Thiotrichales</taxon>
        <taxon>Francisellaceae</taxon>
        <taxon>Francisella</taxon>
    </lineage>
</organism>
<protein>
    <recommendedName>
        <fullName evidence="2">D-alanine--D-alanine ligase</fullName>
        <ecNumber evidence="2">6.3.2.4</ecNumber>
    </recommendedName>
    <alternativeName>
        <fullName evidence="2">D-Ala-D-Ala ligase</fullName>
    </alternativeName>
    <alternativeName>
        <fullName evidence="2">D-alanylalanine synthetase</fullName>
    </alternativeName>
</protein>
<keyword id="KW-0067">ATP-binding</keyword>
<keyword id="KW-0133">Cell shape</keyword>
<keyword id="KW-0961">Cell wall biogenesis/degradation</keyword>
<keyword id="KW-0963">Cytoplasm</keyword>
<keyword id="KW-0436">Ligase</keyword>
<keyword id="KW-0460">Magnesium</keyword>
<keyword id="KW-0464">Manganese</keyword>
<keyword id="KW-0479">Metal-binding</keyword>
<keyword id="KW-0547">Nucleotide-binding</keyword>
<keyword id="KW-0573">Peptidoglycan synthesis</keyword>
<evidence type="ECO:0000250" key="1"/>
<evidence type="ECO:0000255" key="2">
    <source>
        <dbReference type="HAMAP-Rule" id="MF_00047"/>
    </source>
</evidence>